<keyword id="KW-0169">Cobalamin biosynthesis</keyword>
<keyword id="KW-0489">Methyltransferase</keyword>
<keyword id="KW-1185">Reference proteome</keyword>
<keyword id="KW-0949">S-adenosyl-L-methionine</keyword>
<keyword id="KW-0808">Transferase</keyword>
<evidence type="ECO:0000255" key="1">
    <source>
        <dbReference type="HAMAP-Rule" id="MF_00787"/>
    </source>
</evidence>
<evidence type="ECO:0000256" key="2">
    <source>
        <dbReference type="SAM" id="MobiDB-lite"/>
    </source>
</evidence>
<name>CBID_NITV2</name>
<dbReference type="EC" id="2.1.1.195" evidence="1"/>
<dbReference type="EMBL" id="AE017285">
    <property type="protein sequence ID" value="AAS97222.1"/>
    <property type="molecule type" value="Genomic_DNA"/>
</dbReference>
<dbReference type="RefSeq" id="WP_010940016.1">
    <property type="nucleotide sequence ID" value="NC_002937.3"/>
</dbReference>
<dbReference type="RefSeq" id="YP_011962.1">
    <property type="nucleotide sequence ID" value="NC_002937.3"/>
</dbReference>
<dbReference type="SMR" id="P61984"/>
<dbReference type="STRING" id="882.DVU_2750"/>
<dbReference type="PaxDb" id="882-DVU_2750"/>
<dbReference type="EnsemblBacteria" id="AAS97222">
    <property type="protein sequence ID" value="AAS97222"/>
    <property type="gene ID" value="DVU_2750"/>
</dbReference>
<dbReference type="KEGG" id="dvu:DVU_2750"/>
<dbReference type="PATRIC" id="fig|882.5.peg.2488"/>
<dbReference type="eggNOG" id="COG1903">
    <property type="taxonomic scope" value="Bacteria"/>
</dbReference>
<dbReference type="HOGENOM" id="CLU_041273_0_0_7"/>
<dbReference type="OrthoDB" id="6439987at2"/>
<dbReference type="PhylomeDB" id="P61984"/>
<dbReference type="UniPathway" id="UPA00148">
    <property type="reaction ID" value="UER00227"/>
</dbReference>
<dbReference type="Proteomes" id="UP000002194">
    <property type="component" value="Chromosome"/>
</dbReference>
<dbReference type="GO" id="GO:0043780">
    <property type="term" value="F:cobalt-precorrin-5B C1-methyltransferase activity"/>
    <property type="evidence" value="ECO:0007669"/>
    <property type="project" value="RHEA"/>
</dbReference>
<dbReference type="GO" id="GO:0019251">
    <property type="term" value="P:anaerobic cobalamin biosynthetic process"/>
    <property type="evidence" value="ECO:0007669"/>
    <property type="project" value="UniProtKB-UniRule"/>
</dbReference>
<dbReference type="GO" id="GO:0032259">
    <property type="term" value="P:methylation"/>
    <property type="evidence" value="ECO:0007669"/>
    <property type="project" value="UniProtKB-KW"/>
</dbReference>
<dbReference type="Gene3D" id="3.30.2110.10">
    <property type="entry name" value="CbiD-like"/>
    <property type="match status" value="1"/>
</dbReference>
<dbReference type="HAMAP" id="MF_00787">
    <property type="entry name" value="CbiD"/>
    <property type="match status" value="1"/>
</dbReference>
<dbReference type="InterPro" id="IPR002748">
    <property type="entry name" value="CbiD"/>
</dbReference>
<dbReference type="InterPro" id="IPR036074">
    <property type="entry name" value="CbiD_sf"/>
</dbReference>
<dbReference type="NCBIfam" id="TIGR00312">
    <property type="entry name" value="cbiD"/>
    <property type="match status" value="1"/>
</dbReference>
<dbReference type="PANTHER" id="PTHR35863">
    <property type="entry name" value="COBALT-PRECORRIN-5B C(1)-METHYLTRANSFERASE"/>
    <property type="match status" value="1"/>
</dbReference>
<dbReference type="PANTHER" id="PTHR35863:SF1">
    <property type="entry name" value="COBALT-PRECORRIN-5B C(1)-METHYLTRANSFERASE"/>
    <property type="match status" value="1"/>
</dbReference>
<dbReference type="Pfam" id="PF01888">
    <property type="entry name" value="CbiD"/>
    <property type="match status" value="1"/>
</dbReference>
<dbReference type="PIRSF" id="PIRSF026782">
    <property type="entry name" value="CbiD"/>
    <property type="match status" value="1"/>
</dbReference>
<dbReference type="SUPFAM" id="SSF111342">
    <property type="entry name" value="CbiD-like"/>
    <property type="match status" value="1"/>
</dbReference>
<feature type="chain" id="PRO_0000141664" description="Cobalt-precorrin-5B C(1)-methyltransferase">
    <location>
        <begin position="1"/>
        <end position="389"/>
    </location>
</feature>
<feature type="region of interest" description="Disordered" evidence="2">
    <location>
        <begin position="1"/>
        <end position="25"/>
    </location>
</feature>
<accession>P61984</accession>
<gene>
    <name evidence="1" type="primary">cbiD</name>
    <name type="ordered locus">DVU_2750</name>
</gene>
<comment type="function">
    <text evidence="1">Catalyzes the methylation of C-1 in cobalt-precorrin-5B to form cobalt-precorrin-6A.</text>
</comment>
<comment type="catalytic activity">
    <reaction evidence="1">
        <text>Co-precorrin-5B + S-adenosyl-L-methionine = Co-precorrin-6A + S-adenosyl-L-homocysteine</text>
        <dbReference type="Rhea" id="RHEA:26285"/>
        <dbReference type="ChEBI" id="CHEBI:57856"/>
        <dbReference type="ChEBI" id="CHEBI:59789"/>
        <dbReference type="ChEBI" id="CHEBI:60063"/>
        <dbReference type="ChEBI" id="CHEBI:60064"/>
        <dbReference type="EC" id="2.1.1.195"/>
    </reaction>
</comment>
<comment type="pathway">
    <text evidence="1">Cofactor biosynthesis; adenosylcobalamin biosynthesis; cob(II)yrinate a,c-diamide from sirohydrochlorin (anaerobic route): step 6/10.</text>
</comment>
<comment type="similarity">
    <text evidence="1">Belongs to the CbiD family.</text>
</comment>
<reference key="1">
    <citation type="journal article" date="2004" name="Nat. Biotechnol.">
        <title>The genome sequence of the anaerobic, sulfate-reducing bacterium Desulfovibrio vulgaris Hildenborough.</title>
        <authorList>
            <person name="Heidelberg J.F."/>
            <person name="Seshadri R."/>
            <person name="Haveman S.A."/>
            <person name="Hemme C.L."/>
            <person name="Paulsen I.T."/>
            <person name="Kolonay J.F."/>
            <person name="Eisen J.A."/>
            <person name="Ward N.L."/>
            <person name="Methe B.A."/>
            <person name="Brinkac L.M."/>
            <person name="Daugherty S.C."/>
            <person name="DeBoy R.T."/>
            <person name="Dodson R.J."/>
            <person name="Durkin A.S."/>
            <person name="Madupu R."/>
            <person name="Nelson W.C."/>
            <person name="Sullivan S.A."/>
            <person name="Fouts D.E."/>
            <person name="Haft D.H."/>
            <person name="Selengut J."/>
            <person name="Peterson J.D."/>
            <person name="Davidsen T.M."/>
            <person name="Zafar N."/>
            <person name="Zhou L."/>
            <person name="Radune D."/>
            <person name="Dimitrov G."/>
            <person name="Hance M."/>
            <person name="Tran K."/>
            <person name="Khouri H.M."/>
            <person name="Gill J."/>
            <person name="Utterback T.R."/>
            <person name="Feldblyum T.V."/>
            <person name="Wall J.D."/>
            <person name="Voordouw G."/>
            <person name="Fraser C.M."/>
        </authorList>
    </citation>
    <scope>NUCLEOTIDE SEQUENCE [LARGE SCALE GENOMIC DNA]</scope>
    <source>
        <strain>ATCC 29579 / DSM 644 / CCUG 34227 / NCIMB 8303 / VKM B-1760 / Hildenborough</strain>
    </source>
</reference>
<sequence length="389" mass="40350">MESRADHAVPADEGHGATEPPRGRDRAALREGFTTGTAMTAGAVAALRHVFGLPFLPVLSVPLPPQEGVGVPGRLGVPVAEVLTEGDGATGVVIKDGGDDPDATHGARIETHVRLLPDATATLLLEGGTGVGRVTLPGLPVAVGEVAVNPGPRAQLEFAVREVCAAQGYGGGVRVTVRVPEGEAIARHTLNGRLGIVGGISILGTRGTVRPYSHEAWKAAIAQELSVARALGHRRACLSTGRRSETLLMRRYPDLPEQAFVQAADFVAFALGAAAERGFEALAWGCFFGKLVKLAQGLPHTHARTAPLDLPLLAQWCREAGVDEARVEAVAGANTAGQALDIITPDAACHTALDAVTRRAKAHAERFAGPGVGVTIHLFHLNGTELTSA</sequence>
<proteinExistence type="inferred from homology"/>
<organism>
    <name type="scientific">Nitratidesulfovibrio vulgaris (strain ATCC 29579 / DSM 644 / CCUG 34227 / NCIMB 8303 / VKM B-1760 / Hildenborough)</name>
    <name type="common">Desulfovibrio vulgaris</name>
    <dbReference type="NCBI Taxonomy" id="882"/>
    <lineage>
        <taxon>Bacteria</taxon>
        <taxon>Pseudomonadati</taxon>
        <taxon>Thermodesulfobacteriota</taxon>
        <taxon>Desulfovibrionia</taxon>
        <taxon>Desulfovibrionales</taxon>
        <taxon>Desulfovibrionaceae</taxon>
        <taxon>Nitratidesulfovibrio</taxon>
    </lineage>
</organism>
<protein>
    <recommendedName>
        <fullName evidence="1">Cobalt-precorrin-5B C(1)-methyltransferase</fullName>
        <ecNumber evidence="1">2.1.1.195</ecNumber>
    </recommendedName>
    <alternativeName>
        <fullName evidence="1">Cobalt-precorrin-6A synthase</fullName>
    </alternativeName>
</protein>